<evidence type="ECO:0000255" key="1">
    <source>
        <dbReference type="PROSITE-ProRule" id="PRU01384"/>
    </source>
</evidence>
<evidence type="ECO:0000255" key="2">
    <source>
        <dbReference type="RuleBase" id="RU362094"/>
    </source>
</evidence>
<evidence type="ECO:0000256" key="3">
    <source>
        <dbReference type="SAM" id="MobiDB-lite"/>
    </source>
</evidence>
<evidence type="ECO:0000269" key="4">
    <source>
    </source>
</evidence>
<evidence type="ECO:0000269" key="5">
    <source>
    </source>
</evidence>
<evidence type="ECO:0000305" key="6"/>
<evidence type="ECO:0000312" key="7">
    <source>
        <dbReference type="EMBL" id="ABW69249.1"/>
    </source>
</evidence>
<evidence type="ECO:0000312" key="8">
    <source>
        <dbReference type="Proteomes" id="UP000001940"/>
    </source>
</evidence>
<evidence type="ECO:0000312" key="9">
    <source>
        <dbReference type="WormBase" id="ZK1127.7"/>
    </source>
</evidence>
<proteinExistence type="evidence at protein level"/>
<sequence length="842" mass="96658">MSEEDRNVFTSIDKKGGGSKQMDDLNQKCPKRKTSKLKGIPKLEDANDAGTKNSQQCTLILTEGDSAKTLAVSGLSVVGRDKYGVFPFRRKLLNVCDLNVNQIADSAEVNAIIKILGLQYTKKYETEDDFKTLRYGKLLIMANHDSDGSQFKGLLLNFFHRFWPALFKRDFVEDFITPIAKATEGKEEVSFYSLPEYSEWRMNTDNWKSYTIKYYNGLGTLTSKEAKKCFSDMVRHRIRFKYNGADDDKAVNMAFSKKKIEARTDYLMKLMQDKNQRKQQGLAEECLYNKETRFVTLKDFFNYEIVCSWNLHSIPCLVDGLKPGQRKVLFACFKRANKREVKVAQLAGAVAEISAYHHGEQSLMGTIVNLAQDYVGSHNINLLLPIGQFGTRLQGGKDSASARSIFAQLSQVTRTLFPAHDDNVLRFLYEENQRIEPEWYCPIIPMVLVNGAQGTGTGWSTNIPNYNPRELVKNIKRLIAGEPQKALAPWYKNFRGKIIQIDPSRFACYGEVSVLDDNTIEITELPIKQWTQDYKEKVLEGLMESSDKKSPVIVDYKEYHTDTTVKFVVKLSPGKLRELERGQDLHQVFKLQAVINTTCMVLFDAAGWLRTYTSPEAITQEFYDSRQEKYVQRKEYLLGVLQAQSKRLTNQARFILATINNKIVLENKKKTAIVDVLIKMKFDADPVKKWKEDQKLKELRESGEIELDEDDLAAVAVEEGEDISSAAKAVETKLSDYDYLVGLALIKLSEEEKNKLIKESEEKMAEVRVLEKKTWQDLWITDLDNFMSELTSRRLARKLSLRRTATRWYAMICQRRVTWSSMKESISIRTMTVWSVRMSSRS</sequence>
<dbReference type="EMBL" id="EU191083">
    <property type="protein sequence ID" value="ABW69249.1"/>
    <property type="molecule type" value="mRNA"/>
</dbReference>
<dbReference type="EMBL" id="BX284602">
    <property type="protein sequence ID" value="CCD73727.1"/>
    <property type="molecule type" value="Genomic_DNA"/>
</dbReference>
<dbReference type="RefSeq" id="NP_495440.4">
    <property type="nucleotide sequence ID" value="NM_063039.7"/>
</dbReference>
<dbReference type="SMR" id="G5ECQ8"/>
<dbReference type="FunCoup" id="G5ECQ8">
    <property type="interactions" value="154"/>
</dbReference>
<dbReference type="STRING" id="6239.ZK1127.7.1"/>
<dbReference type="PaxDb" id="6239-ZK1127.7"/>
<dbReference type="PeptideAtlas" id="G5ECQ8"/>
<dbReference type="EnsemblMetazoa" id="ZK1127.7.1">
    <property type="protein sequence ID" value="ZK1127.7.1"/>
    <property type="gene ID" value="WBGene00022854"/>
</dbReference>
<dbReference type="GeneID" id="191525"/>
<dbReference type="KEGG" id="cel:CELE_ZK1127.7"/>
<dbReference type="AGR" id="WB:WBGene00022854"/>
<dbReference type="CTD" id="191525"/>
<dbReference type="WormBase" id="ZK1127.7">
    <property type="protein sequence ID" value="CE42594"/>
    <property type="gene ID" value="WBGene00022854"/>
    <property type="gene designation" value="cin-4"/>
</dbReference>
<dbReference type="eggNOG" id="KOG0355">
    <property type="taxonomic scope" value="Eukaryota"/>
</dbReference>
<dbReference type="GeneTree" id="ENSGT00940000168342"/>
<dbReference type="HOGENOM" id="CLU_001935_3_0_1"/>
<dbReference type="InParanoid" id="G5ECQ8"/>
<dbReference type="OMA" id="ITNENEW"/>
<dbReference type="OrthoDB" id="276498at2759"/>
<dbReference type="PhylomeDB" id="G5ECQ8"/>
<dbReference type="Reactome" id="R-CEL-4615885">
    <property type="pathway name" value="SUMOylation of DNA replication proteins"/>
</dbReference>
<dbReference type="PRO" id="PR:G5ECQ8"/>
<dbReference type="Proteomes" id="UP000001940">
    <property type="component" value="Chromosome II"/>
</dbReference>
<dbReference type="Bgee" id="WBGene00022854">
    <property type="expression patterns" value="Expressed in germ line (C elegans) and 3 other cell types or tissues"/>
</dbReference>
<dbReference type="GO" id="GO:0005634">
    <property type="term" value="C:nucleus"/>
    <property type="evidence" value="ECO:0000318"/>
    <property type="project" value="GO_Central"/>
</dbReference>
<dbReference type="GO" id="GO:0005524">
    <property type="term" value="F:ATP binding"/>
    <property type="evidence" value="ECO:0007669"/>
    <property type="project" value="InterPro"/>
</dbReference>
<dbReference type="GO" id="GO:0003677">
    <property type="term" value="F:DNA binding"/>
    <property type="evidence" value="ECO:0007669"/>
    <property type="project" value="UniProtKB-KW"/>
</dbReference>
<dbReference type="GO" id="GO:0003918">
    <property type="term" value="F:DNA topoisomerase type II (double strand cut, ATP-hydrolyzing) activity"/>
    <property type="evidence" value="ECO:0007669"/>
    <property type="project" value="InterPro"/>
</dbReference>
<dbReference type="GO" id="GO:0051301">
    <property type="term" value="P:cell division"/>
    <property type="evidence" value="ECO:0007669"/>
    <property type="project" value="UniProtKB-KW"/>
</dbReference>
<dbReference type="GO" id="GO:0006265">
    <property type="term" value="P:DNA topological change"/>
    <property type="evidence" value="ECO:0007669"/>
    <property type="project" value="InterPro"/>
</dbReference>
<dbReference type="GO" id="GO:0000712">
    <property type="term" value="P:resolution of meiotic recombination intermediates"/>
    <property type="evidence" value="ECO:0000318"/>
    <property type="project" value="GO_Central"/>
</dbReference>
<dbReference type="GO" id="GO:0000819">
    <property type="term" value="P:sister chromatid segregation"/>
    <property type="evidence" value="ECO:0000318"/>
    <property type="project" value="GO_Central"/>
</dbReference>
<dbReference type="CDD" id="cd00187">
    <property type="entry name" value="TOP4c"/>
    <property type="match status" value="1"/>
</dbReference>
<dbReference type="FunFam" id="1.10.268.10:FF:000002">
    <property type="entry name" value="DNA topoisomerase 2"/>
    <property type="match status" value="1"/>
</dbReference>
<dbReference type="FunFam" id="3.30.1360.40:FF:000003">
    <property type="entry name" value="DNA topoisomerase 2"/>
    <property type="match status" value="1"/>
</dbReference>
<dbReference type="FunFam" id="3.30.1490.30:FF:000001">
    <property type="entry name" value="DNA topoisomerase 2"/>
    <property type="match status" value="1"/>
</dbReference>
<dbReference type="FunFam" id="3.40.50.670:FF:000001">
    <property type="entry name" value="DNA topoisomerase 2"/>
    <property type="match status" value="1"/>
</dbReference>
<dbReference type="FunFam" id="3.90.199.10:FF:000002">
    <property type="entry name" value="DNA topoisomerase 2"/>
    <property type="match status" value="1"/>
</dbReference>
<dbReference type="Gene3D" id="3.30.1360.40">
    <property type="match status" value="1"/>
</dbReference>
<dbReference type="Gene3D" id="3.30.1490.30">
    <property type="match status" value="1"/>
</dbReference>
<dbReference type="Gene3D" id="3.40.50.670">
    <property type="match status" value="1"/>
</dbReference>
<dbReference type="Gene3D" id="3.90.199.10">
    <property type="entry name" value="Topoisomerase II, domain 5"/>
    <property type="match status" value="1"/>
</dbReference>
<dbReference type="Gene3D" id="1.10.268.10">
    <property type="entry name" value="Topoisomerase, domain 3"/>
    <property type="match status" value="1"/>
</dbReference>
<dbReference type="InterPro" id="IPR050634">
    <property type="entry name" value="DNA_Topoisomerase_II"/>
</dbReference>
<dbReference type="InterPro" id="IPR001241">
    <property type="entry name" value="Topo_IIA"/>
</dbReference>
<dbReference type="InterPro" id="IPR013760">
    <property type="entry name" value="Topo_IIA-like_dom_sf"/>
</dbReference>
<dbReference type="InterPro" id="IPR013758">
    <property type="entry name" value="Topo_IIA_A/C_ab"/>
</dbReference>
<dbReference type="InterPro" id="IPR013757">
    <property type="entry name" value="Topo_IIA_A_a_sf"/>
</dbReference>
<dbReference type="InterPro" id="IPR013759">
    <property type="entry name" value="Topo_IIA_B_C"/>
</dbReference>
<dbReference type="InterPro" id="IPR002205">
    <property type="entry name" value="Topo_IIA_dom_A"/>
</dbReference>
<dbReference type="InterPro" id="IPR001154">
    <property type="entry name" value="TopoII_euk"/>
</dbReference>
<dbReference type="InterPro" id="IPR018522">
    <property type="entry name" value="TopoIIA_CS"/>
</dbReference>
<dbReference type="InterPro" id="IPR031660">
    <property type="entry name" value="TOPRIM_C"/>
</dbReference>
<dbReference type="PANTHER" id="PTHR10169:SF62">
    <property type="entry name" value="DNA TOPOISOMERASE 2 TOP-2-RELATED"/>
    <property type="match status" value="1"/>
</dbReference>
<dbReference type="PANTHER" id="PTHR10169">
    <property type="entry name" value="DNA TOPOISOMERASE/GYRASE"/>
    <property type="match status" value="1"/>
</dbReference>
<dbReference type="Pfam" id="PF00521">
    <property type="entry name" value="DNA_topoisoIV"/>
    <property type="match status" value="1"/>
</dbReference>
<dbReference type="Pfam" id="PF16898">
    <property type="entry name" value="TOPRIM_C"/>
    <property type="match status" value="1"/>
</dbReference>
<dbReference type="PRINTS" id="PR01158">
    <property type="entry name" value="TOPISMRASEII"/>
</dbReference>
<dbReference type="PRINTS" id="PR00418">
    <property type="entry name" value="TPI2FAMILY"/>
</dbReference>
<dbReference type="SMART" id="SM00433">
    <property type="entry name" value="TOP2c"/>
    <property type="match status" value="1"/>
</dbReference>
<dbReference type="SMART" id="SM00434">
    <property type="entry name" value="TOP4c"/>
    <property type="match status" value="1"/>
</dbReference>
<dbReference type="SUPFAM" id="SSF56719">
    <property type="entry name" value="Type II DNA topoisomerase"/>
    <property type="match status" value="1"/>
</dbReference>
<dbReference type="PROSITE" id="PS52040">
    <property type="entry name" value="TOPO_IIA"/>
    <property type="match status" value="1"/>
</dbReference>
<dbReference type="PROSITE" id="PS00177">
    <property type="entry name" value="TOPOISOMERASE_II"/>
    <property type="match status" value="1"/>
</dbReference>
<comment type="function">
    <text evidence="4">Plays a role in the removal of cohesin from kinetochores on mitotic chromosomes and is required for centromere resolution.</text>
</comment>
<comment type="disruption phenotype">
    <text evidence="4">RNAi-mediated knockdown leads to impaired removal of the cohesin component scc-1 from kinetochores on mitotic metaphase chromosomes.</text>
</comment>
<comment type="similarity">
    <text evidence="2">Belongs to the type II topoisomerase family.</text>
</comment>
<comment type="caution">
    <text evidence="6">Lacks the conserved ATP binding sites, the conserved active site tyrosine at position 404, the conserved isoleucine at position 455 important for DNA bending, and the conserved magnesium binding site at position 143, and therefore probably lacks topoisomerase activity.</text>
</comment>
<gene>
    <name evidence="9" type="primary">cin-4</name>
    <name evidence="9" type="ORF">ZK1127.7</name>
</gene>
<keyword id="KW-0131">Cell cycle</keyword>
<keyword id="KW-0132">Cell division</keyword>
<keyword id="KW-0238">DNA-binding</keyword>
<keyword id="KW-0498">Mitosis</keyword>
<keyword id="KW-1185">Reference proteome</keyword>
<accession>G5ECQ8</accession>
<organism evidence="8">
    <name type="scientific">Caenorhabditis elegans</name>
    <dbReference type="NCBI Taxonomy" id="6239"/>
    <lineage>
        <taxon>Eukaryota</taxon>
        <taxon>Metazoa</taxon>
        <taxon>Ecdysozoa</taxon>
        <taxon>Nematoda</taxon>
        <taxon>Chromadorea</taxon>
        <taxon>Rhabditida</taxon>
        <taxon>Rhabditina</taxon>
        <taxon>Rhabditomorpha</taxon>
        <taxon>Rhabditoidea</taxon>
        <taxon>Rhabditidae</taxon>
        <taxon>Peloderinae</taxon>
        <taxon>Caenorhabditis</taxon>
    </lineage>
</organism>
<name>CIN4_CAEEL</name>
<reference evidence="8" key="1">
    <citation type="journal article" date="1998" name="Science">
        <title>Genome sequence of the nematode C. elegans: a platform for investigating biology.</title>
        <authorList>
            <consortium name="The C. elegans sequencing consortium"/>
        </authorList>
    </citation>
    <scope>NUCLEOTIDE SEQUENCE [LARGE SCALE GENOMIC DNA]</scope>
    <source>
        <strain>Bristol N2</strain>
    </source>
</reference>
<reference evidence="7" key="2">
    <citation type="journal article" date="2008" name="Genetics">
        <title>cin-4, a gene with homology to topoisomerase II, is required for centromere resolution by cohesin removal from sister kinetochores during mitosis.</title>
        <authorList>
            <person name="Stanvitch G."/>
            <person name="Moore L.L."/>
        </authorList>
    </citation>
    <scope>NUCLEOTIDE SEQUENCE [MRNA]</scope>
    <scope>FUNCTION</scope>
    <scope>DISRUPTION PHENOTYPE</scope>
    <scope>MUTAGENESIS OF GLU-304</scope>
</reference>
<reference evidence="6" key="3">
    <citation type="journal article" date="2016" name="Genetics">
        <title>The identification of a novel mutant allele of topoisomerase II in Caenorhabditis elegans reveals a unique role in chromosome segregation during spermatogenesis.</title>
        <authorList>
            <person name="Jaramillo-Lambert A."/>
            <person name="Fabritius A.S."/>
            <person name="Hansen T.J."/>
            <person name="Smith H.E."/>
            <person name="Golden A."/>
        </authorList>
    </citation>
    <scope>MUTAGENESIS OF GLU-304</scope>
</reference>
<feature type="chain" id="PRO_0000442730" description="DNA topoisomerase-like protein cin-4">
    <location>
        <begin position="1"/>
        <end position="842"/>
    </location>
</feature>
<feature type="domain" description="Topo IIA-type catalytic" evidence="1">
    <location>
        <begin position="314"/>
        <end position="783"/>
    </location>
</feature>
<feature type="region of interest" description="Disordered" evidence="3">
    <location>
        <begin position="1"/>
        <end position="50"/>
    </location>
</feature>
<feature type="compositionally biased region" description="Basic and acidic residues" evidence="3">
    <location>
        <begin position="1"/>
        <end position="26"/>
    </location>
</feature>
<feature type="mutagenesis site" description="In av59; no effect on viability observed at 15, 24 and 25 degrees Celsius." evidence="5">
    <original>E</original>
    <variation>G</variation>
    <location>
        <position position="304"/>
    </location>
</feature>
<feature type="mutagenesis site" description="In mr127; temperature sensitive mutant. At the nonpermissive temperature, failure in proper hcp-3 localization on mitotic chromosomes indicating unresolved kinetochores, aberrant localization of the cohesin component scc-1 to mitotic chromosomes and centrosomes, defects in centromere resolution and in proper chromosome segregation during anaphase." evidence="4">
    <original>E</original>
    <variation>G</variation>
    <location>
        <position position="304"/>
    </location>
</feature>
<protein>
    <recommendedName>
        <fullName evidence="6">DNA topoisomerase-like protein cin-4</fullName>
    </recommendedName>
</protein>